<proteinExistence type="inferred from homology"/>
<accession>Q5L6U4</accession>
<keyword id="KW-0030">Aminoacyl-tRNA synthetase</keyword>
<keyword id="KW-0067">ATP-binding</keyword>
<keyword id="KW-0963">Cytoplasm</keyword>
<keyword id="KW-0436">Ligase</keyword>
<keyword id="KW-0547">Nucleotide-binding</keyword>
<keyword id="KW-0648">Protein biosynthesis</keyword>
<gene>
    <name evidence="1" type="primary">argS</name>
    <name type="ordered locus">CAB169</name>
</gene>
<name>SYR_CHLAB</name>
<protein>
    <recommendedName>
        <fullName evidence="1">Arginine--tRNA ligase</fullName>
        <ecNumber evidence="1">6.1.1.19</ecNumber>
    </recommendedName>
    <alternativeName>
        <fullName evidence="1">Arginyl-tRNA synthetase</fullName>
        <shortName evidence="1">ArgRS</shortName>
    </alternativeName>
</protein>
<feature type="chain" id="PRO_0000242005" description="Arginine--tRNA ligase">
    <location>
        <begin position="1"/>
        <end position="562"/>
    </location>
</feature>
<feature type="short sequence motif" description="'HIGH' region">
    <location>
        <begin position="122"/>
        <end position="132"/>
    </location>
</feature>
<dbReference type="EC" id="6.1.1.19" evidence="1"/>
<dbReference type="EMBL" id="CR848038">
    <property type="protein sequence ID" value="CAH63627.1"/>
    <property type="molecule type" value="Genomic_DNA"/>
</dbReference>
<dbReference type="RefSeq" id="WP_011096875.1">
    <property type="nucleotide sequence ID" value="NC_004552.2"/>
</dbReference>
<dbReference type="SMR" id="Q5L6U4"/>
<dbReference type="KEGG" id="cab:CAB169"/>
<dbReference type="eggNOG" id="COG0018">
    <property type="taxonomic scope" value="Bacteria"/>
</dbReference>
<dbReference type="HOGENOM" id="CLU_006406_5_1_0"/>
<dbReference type="OrthoDB" id="9805987at2"/>
<dbReference type="Proteomes" id="UP000001012">
    <property type="component" value="Chromosome"/>
</dbReference>
<dbReference type="GO" id="GO:0005737">
    <property type="term" value="C:cytoplasm"/>
    <property type="evidence" value="ECO:0007669"/>
    <property type="project" value="UniProtKB-SubCell"/>
</dbReference>
<dbReference type="GO" id="GO:0004814">
    <property type="term" value="F:arginine-tRNA ligase activity"/>
    <property type="evidence" value="ECO:0007669"/>
    <property type="project" value="UniProtKB-UniRule"/>
</dbReference>
<dbReference type="GO" id="GO:0005524">
    <property type="term" value="F:ATP binding"/>
    <property type="evidence" value="ECO:0007669"/>
    <property type="project" value="UniProtKB-UniRule"/>
</dbReference>
<dbReference type="GO" id="GO:0006420">
    <property type="term" value="P:arginyl-tRNA aminoacylation"/>
    <property type="evidence" value="ECO:0007669"/>
    <property type="project" value="UniProtKB-UniRule"/>
</dbReference>
<dbReference type="CDD" id="cd00671">
    <property type="entry name" value="ArgRS_core"/>
    <property type="match status" value="1"/>
</dbReference>
<dbReference type="FunFam" id="3.40.50.620:FF:000030">
    <property type="entry name" value="Arginine--tRNA ligase"/>
    <property type="match status" value="1"/>
</dbReference>
<dbReference type="FunFam" id="1.10.730.10:FF:000006">
    <property type="entry name" value="Arginyl-tRNA synthetase 2, mitochondrial"/>
    <property type="match status" value="1"/>
</dbReference>
<dbReference type="Gene3D" id="3.30.1360.70">
    <property type="entry name" value="Arginyl tRNA synthetase N-terminal domain"/>
    <property type="match status" value="1"/>
</dbReference>
<dbReference type="Gene3D" id="3.40.50.620">
    <property type="entry name" value="HUPs"/>
    <property type="match status" value="1"/>
</dbReference>
<dbReference type="Gene3D" id="1.10.730.10">
    <property type="entry name" value="Isoleucyl-tRNA Synthetase, Domain 1"/>
    <property type="match status" value="1"/>
</dbReference>
<dbReference type="HAMAP" id="MF_00123">
    <property type="entry name" value="Arg_tRNA_synth"/>
    <property type="match status" value="1"/>
</dbReference>
<dbReference type="InterPro" id="IPR001412">
    <property type="entry name" value="aa-tRNA-synth_I_CS"/>
</dbReference>
<dbReference type="InterPro" id="IPR001278">
    <property type="entry name" value="Arg-tRNA-ligase"/>
</dbReference>
<dbReference type="InterPro" id="IPR005148">
    <property type="entry name" value="Arg-tRNA-synth_N"/>
</dbReference>
<dbReference type="InterPro" id="IPR036695">
    <property type="entry name" value="Arg-tRNA-synth_N_sf"/>
</dbReference>
<dbReference type="InterPro" id="IPR035684">
    <property type="entry name" value="ArgRS_core"/>
</dbReference>
<dbReference type="InterPro" id="IPR008909">
    <property type="entry name" value="DALR_anticod-bd"/>
</dbReference>
<dbReference type="InterPro" id="IPR014729">
    <property type="entry name" value="Rossmann-like_a/b/a_fold"/>
</dbReference>
<dbReference type="InterPro" id="IPR009080">
    <property type="entry name" value="tRNAsynth_Ia_anticodon-bd"/>
</dbReference>
<dbReference type="NCBIfam" id="TIGR00456">
    <property type="entry name" value="argS"/>
    <property type="match status" value="1"/>
</dbReference>
<dbReference type="PANTHER" id="PTHR11956:SF5">
    <property type="entry name" value="ARGININE--TRNA LIGASE, CYTOPLASMIC"/>
    <property type="match status" value="1"/>
</dbReference>
<dbReference type="PANTHER" id="PTHR11956">
    <property type="entry name" value="ARGINYL-TRNA SYNTHETASE"/>
    <property type="match status" value="1"/>
</dbReference>
<dbReference type="Pfam" id="PF03485">
    <property type="entry name" value="Arg_tRNA_synt_N"/>
    <property type="match status" value="1"/>
</dbReference>
<dbReference type="Pfam" id="PF05746">
    <property type="entry name" value="DALR_1"/>
    <property type="match status" value="1"/>
</dbReference>
<dbReference type="Pfam" id="PF00750">
    <property type="entry name" value="tRNA-synt_1d"/>
    <property type="match status" value="1"/>
</dbReference>
<dbReference type="PRINTS" id="PR01038">
    <property type="entry name" value="TRNASYNTHARG"/>
</dbReference>
<dbReference type="SMART" id="SM01016">
    <property type="entry name" value="Arg_tRNA_synt_N"/>
    <property type="match status" value="1"/>
</dbReference>
<dbReference type="SMART" id="SM00836">
    <property type="entry name" value="DALR_1"/>
    <property type="match status" value="1"/>
</dbReference>
<dbReference type="SUPFAM" id="SSF47323">
    <property type="entry name" value="Anticodon-binding domain of a subclass of class I aminoacyl-tRNA synthetases"/>
    <property type="match status" value="1"/>
</dbReference>
<dbReference type="SUPFAM" id="SSF55190">
    <property type="entry name" value="Arginyl-tRNA synthetase (ArgRS), N-terminal 'additional' domain"/>
    <property type="match status" value="1"/>
</dbReference>
<dbReference type="SUPFAM" id="SSF52374">
    <property type="entry name" value="Nucleotidylyl transferase"/>
    <property type="match status" value="1"/>
</dbReference>
<dbReference type="PROSITE" id="PS00178">
    <property type="entry name" value="AA_TRNA_LIGASE_I"/>
    <property type="match status" value="1"/>
</dbReference>
<comment type="catalytic activity">
    <reaction evidence="1">
        <text>tRNA(Arg) + L-arginine + ATP = L-arginyl-tRNA(Arg) + AMP + diphosphate</text>
        <dbReference type="Rhea" id="RHEA:20301"/>
        <dbReference type="Rhea" id="RHEA-COMP:9658"/>
        <dbReference type="Rhea" id="RHEA-COMP:9673"/>
        <dbReference type="ChEBI" id="CHEBI:30616"/>
        <dbReference type="ChEBI" id="CHEBI:32682"/>
        <dbReference type="ChEBI" id="CHEBI:33019"/>
        <dbReference type="ChEBI" id="CHEBI:78442"/>
        <dbReference type="ChEBI" id="CHEBI:78513"/>
        <dbReference type="ChEBI" id="CHEBI:456215"/>
        <dbReference type="EC" id="6.1.1.19"/>
    </reaction>
</comment>
<comment type="subunit">
    <text evidence="1">Monomer.</text>
</comment>
<comment type="subcellular location">
    <subcellularLocation>
        <location evidence="1">Cytoplasm</location>
    </subcellularLocation>
</comment>
<comment type="similarity">
    <text evidence="1">Belongs to the class-I aminoacyl-tRNA synthetase family.</text>
</comment>
<organism>
    <name type="scientific">Chlamydia abortus (strain DSM 27085 / S26/3)</name>
    <name type="common">Chlamydophila abortus</name>
    <dbReference type="NCBI Taxonomy" id="218497"/>
    <lineage>
        <taxon>Bacteria</taxon>
        <taxon>Pseudomonadati</taxon>
        <taxon>Chlamydiota</taxon>
        <taxon>Chlamydiia</taxon>
        <taxon>Chlamydiales</taxon>
        <taxon>Chlamydiaceae</taxon>
        <taxon>Chlamydia/Chlamydophila group</taxon>
        <taxon>Chlamydia</taxon>
    </lineage>
</organism>
<reference key="1">
    <citation type="journal article" date="2005" name="Genome Res.">
        <title>The Chlamydophila abortus genome sequence reveals an array of variable proteins that contribute to interspecies variation.</title>
        <authorList>
            <person name="Thomson N.R."/>
            <person name="Yeats C."/>
            <person name="Bell K."/>
            <person name="Holden M.T.G."/>
            <person name="Bentley S.D."/>
            <person name="Livingstone M."/>
            <person name="Cerdeno-Tarraga A.-M."/>
            <person name="Harris B."/>
            <person name="Doggett J."/>
            <person name="Ormond D."/>
            <person name="Mungall K."/>
            <person name="Clarke K."/>
            <person name="Feltwell T."/>
            <person name="Hance Z."/>
            <person name="Sanders M."/>
            <person name="Quail M.A."/>
            <person name="Price C."/>
            <person name="Barrell B.G."/>
            <person name="Parkhill J."/>
            <person name="Longbottom D."/>
        </authorList>
    </citation>
    <scope>NUCLEOTIDE SEQUENCE [LARGE SCALE GENOMIC DNA]</scope>
    <source>
        <strain>DSM 27085 / S26/3</strain>
    </source>
</reference>
<evidence type="ECO:0000255" key="1">
    <source>
        <dbReference type="HAMAP-Rule" id="MF_00123"/>
    </source>
</evidence>
<sequence>MTLLSYLSSLCREAILSAFPQIETISPDITQSTKELFGHYQCNDAMKLARTLKMPPRAIAESIVKQISKNNFSSIEIAGAGFINFTFSKEFLNLSLQSYSRDLSSGFRVQDPKKVVIDFSSPNIAKDMHVGHLRSTIIGDCLARIFTFVGHDVLRLNHIGDWGTAFGMLITYLQEESSEDIESLEDLTILYKKAHVRFAEDAEFKKRSQTNVVALQSGDPKARKLWERICEISERAFQKIYNILDIQIEKRGESFYNPFLPEIIEDLEKKNLITVSDEAKCVFHEGFSIPLMVQKRDGGYNYATTDLAAMRYRVEQDHADRIIIVTDMGQSLHFQLLEATALAAGYLPNKDVFSHVGFGLVLDSEGKKFKTRSGENIKLQELLDTAIDQAVATLKKHRPEMSDAEITERAPVLGMNAIKYADLSSHRVSDYVFSFEKMLRFEGNTAMFILYGYVRIQGIKRRLGIEKLSLESAANIQEPSEEALALALLRFPEAIDITLKELCPHFLTDYLYMLTNKFHAFFRDCHIEGSPHQKERLYLCALVEKTLATGMHLLGLQTLDRL</sequence>